<name>PSTB1_BACLD</name>
<feature type="chain" id="PRO_0000092778" description="Phosphate import ATP-binding protein PstB 1">
    <location>
        <begin position="1"/>
        <end position="259"/>
    </location>
</feature>
<feature type="domain" description="ABC transporter" evidence="1">
    <location>
        <begin position="7"/>
        <end position="254"/>
    </location>
</feature>
<feature type="binding site" evidence="1">
    <location>
        <begin position="45"/>
        <end position="52"/>
    </location>
    <ligand>
        <name>ATP</name>
        <dbReference type="ChEBI" id="CHEBI:30616"/>
    </ligand>
</feature>
<sequence>MSAVTAVKPEDVYQINDLNLWYGEHHALKNINLTIPEYEITAIIGPSGCGKSTFIKTLNLMINMVPNVKMTGEISYNGTNVLNSKVDLVELRKKVGMVFQKGNPFPQSIFDNVAYGPRIHGLKNKKELNERVEKALVDVALWDEVKDRLHSQALGLSGGQQQRLCIARALATNPDVLLMDEPTSALDPVSTLKIEELMLKLKEKYTIAIVTHNMQQASRISDQTAFFLMGELIECNDTVKMFSSPDDHRTKDYITGRFG</sequence>
<protein>
    <recommendedName>
        <fullName evidence="1">Phosphate import ATP-binding protein PstB 1</fullName>
        <ecNumber evidence="1">7.3.2.1</ecNumber>
    </recommendedName>
    <alternativeName>
        <fullName evidence="1">ABC phosphate transporter 1</fullName>
    </alternativeName>
    <alternativeName>
        <fullName evidence="1">Phosphate-transporting ATPase 1</fullName>
    </alternativeName>
</protein>
<gene>
    <name evidence="1" type="primary">pstB1</name>
    <name type="synonym">pstBB</name>
    <name type="ordered locus">BLi02672</name>
    <name type="ordered locus">BL03715</name>
</gene>
<evidence type="ECO:0000255" key="1">
    <source>
        <dbReference type="HAMAP-Rule" id="MF_01702"/>
    </source>
</evidence>
<organism>
    <name type="scientific">Bacillus licheniformis (strain ATCC 14580 / DSM 13 / JCM 2505 / CCUG 7422 / NBRC 12200 / NCIMB 9375 / NCTC 10341 / NRRL NRS-1264 / Gibson 46)</name>
    <dbReference type="NCBI Taxonomy" id="279010"/>
    <lineage>
        <taxon>Bacteria</taxon>
        <taxon>Bacillati</taxon>
        <taxon>Bacillota</taxon>
        <taxon>Bacilli</taxon>
        <taxon>Bacillales</taxon>
        <taxon>Bacillaceae</taxon>
        <taxon>Bacillus</taxon>
    </lineage>
</organism>
<proteinExistence type="inferred from homology"/>
<reference key="1">
    <citation type="journal article" date="2004" name="J. Mol. Microbiol. Biotechnol.">
        <title>The complete genome sequence of Bacillus licheniformis DSM13, an organism with great industrial potential.</title>
        <authorList>
            <person name="Veith B."/>
            <person name="Herzberg C."/>
            <person name="Steckel S."/>
            <person name="Feesche J."/>
            <person name="Maurer K.H."/>
            <person name="Ehrenreich P."/>
            <person name="Baeumer S."/>
            <person name="Henne A."/>
            <person name="Liesegang H."/>
            <person name="Merkl R."/>
            <person name="Ehrenreich A."/>
            <person name="Gottschalk G."/>
        </authorList>
    </citation>
    <scope>NUCLEOTIDE SEQUENCE [LARGE SCALE GENOMIC DNA]</scope>
    <source>
        <strain>ATCC 14580 / DSM 13 / JCM 2505 / CCUG 7422 / NBRC 12200 / NCIMB 9375 / NCTC 10341 / NRRL NRS-1264 / Gibson 46</strain>
    </source>
</reference>
<reference key="2">
    <citation type="journal article" date="2004" name="Genome Biol.">
        <title>Complete genome sequence of the industrial bacterium Bacillus licheniformis and comparisons with closely related Bacillus species.</title>
        <authorList>
            <person name="Rey M.W."/>
            <person name="Ramaiya P."/>
            <person name="Nelson B.A."/>
            <person name="Brody-Karpin S.D."/>
            <person name="Zaretsky E.J."/>
            <person name="Tang M."/>
            <person name="Lopez de Leon A."/>
            <person name="Xiang H."/>
            <person name="Gusti V."/>
            <person name="Clausen I.G."/>
            <person name="Olsen P.B."/>
            <person name="Rasmussen M.D."/>
            <person name="Andersen J.T."/>
            <person name="Joergensen P.L."/>
            <person name="Larsen T.S."/>
            <person name="Sorokin A."/>
            <person name="Bolotin A."/>
            <person name="Lapidus A."/>
            <person name="Galleron N."/>
            <person name="Ehrlich S.D."/>
            <person name="Berka R.M."/>
        </authorList>
    </citation>
    <scope>NUCLEOTIDE SEQUENCE [LARGE SCALE GENOMIC DNA]</scope>
    <source>
        <strain>ATCC 14580 / DSM 13 / JCM 2505 / CCUG 7422 / NBRC 12200 / NCIMB 9375 / NCTC 10341 / NRRL NRS-1264 / Gibson 46</strain>
    </source>
</reference>
<dbReference type="EC" id="7.3.2.1" evidence="1"/>
<dbReference type="EMBL" id="AE017333">
    <property type="protein sequence ID" value="AAU41544.1"/>
    <property type="molecule type" value="Genomic_DNA"/>
</dbReference>
<dbReference type="EMBL" id="CP000002">
    <property type="protein sequence ID" value="AAU24184.1"/>
    <property type="molecule type" value="Genomic_DNA"/>
</dbReference>
<dbReference type="SMR" id="Q65HC0"/>
<dbReference type="STRING" id="279010.BL03715"/>
<dbReference type="KEGG" id="bld:BLi02672"/>
<dbReference type="KEGG" id="bli:BL03715"/>
<dbReference type="eggNOG" id="COG1117">
    <property type="taxonomic scope" value="Bacteria"/>
</dbReference>
<dbReference type="HOGENOM" id="CLU_000604_1_22_9"/>
<dbReference type="Proteomes" id="UP000000606">
    <property type="component" value="Chromosome"/>
</dbReference>
<dbReference type="GO" id="GO:0005886">
    <property type="term" value="C:plasma membrane"/>
    <property type="evidence" value="ECO:0007669"/>
    <property type="project" value="UniProtKB-SubCell"/>
</dbReference>
<dbReference type="GO" id="GO:0005524">
    <property type="term" value="F:ATP binding"/>
    <property type="evidence" value="ECO:0007669"/>
    <property type="project" value="UniProtKB-KW"/>
</dbReference>
<dbReference type="GO" id="GO:0016887">
    <property type="term" value="F:ATP hydrolysis activity"/>
    <property type="evidence" value="ECO:0007669"/>
    <property type="project" value="InterPro"/>
</dbReference>
<dbReference type="GO" id="GO:0015415">
    <property type="term" value="F:ATPase-coupled phosphate ion transmembrane transporter activity"/>
    <property type="evidence" value="ECO:0007669"/>
    <property type="project" value="UniProtKB-EC"/>
</dbReference>
<dbReference type="GO" id="GO:0035435">
    <property type="term" value="P:phosphate ion transmembrane transport"/>
    <property type="evidence" value="ECO:0007669"/>
    <property type="project" value="InterPro"/>
</dbReference>
<dbReference type="CDD" id="cd03260">
    <property type="entry name" value="ABC_PstB_phosphate_transporter"/>
    <property type="match status" value="1"/>
</dbReference>
<dbReference type="Gene3D" id="3.40.50.300">
    <property type="entry name" value="P-loop containing nucleotide triphosphate hydrolases"/>
    <property type="match status" value="1"/>
</dbReference>
<dbReference type="InterPro" id="IPR003593">
    <property type="entry name" value="AAA+_ATPase"/>
</dbReference>
<dbReference type="InterPro" id="IPR003439">
    <property type="entry name" value="ABC_transporter-like_ATP-bd"/>
</dbReference>
<dbReference type="InterPro" id="IPR017871">
    <property type="entry name" value="ABC_transporter-like_CS"/>
</dbReference>
<dbReference type="InterPro" id="IPR027417">
    <property type="entry name" value="P-loop_NTPase"/>
</dbReference>
<dbReference type="InterPro" id="IPR005670">
    <property type="entry name" value="PstB-like"/>
</dbReference>
<dbReference type="NCBIfam" id="TIGR00972">
    <property type="entry name" value="3a0107s01c2"/>
    <property type="match status" value="1"/>
</dbReference>
<dbReference type="PANTHER" id="PTHR43423">
    <property type="entry name" value="ABC TRANSPORTER I FAMILY MEMBER 17"/>
    <property type="match status" value="1"/>
</dbReference>
<dbReference type="PANTHER" id="PTHR43423:SF1">
    <property type="entry name" value="ABC TRANSPORTER I FAMILY MEMBER 17"/>
    <property type="match status" value="1"/>
</dbReference>
<dbReference type="Pfam" id="PF00005">
    <property type="entry name" value="ABC_tran"/>
    <property type="match status" value="1"/>
</dbReference>
<dbReference type="SMART" id="SM00382">
    <property type="entry name" value="AAA"/>
    <property type="match status" value="1"/>
</dbReference>
<dbReference type="SUPFAM" id="SSF52540">
    <property type="entry name" value="P-loop containing nucleoside triphosphate hydrolases"/>
    <property type="match status" value="1"/>
</dbReference>
<dbReference type="PROSITE" id="PS00211">
    <property type="entry name" value="ABC_TRANSPORTER_1"/>
    <property type="match status" value="1"/>
</dbReference>
<dbReference type="PROSITE" id="PS50893">
    <property type="entry name" value="ABC_TRANSPORTER_2"/>
    <property type="match status" value="1"/>
</dbReference>
<dbReference type="PROSITE" id="PS51238">
    <property type="entry name" value="PSTB"/>
    <property type="match status" value="1"/>
</dbReference>
<keyword id="KW-0067">ATP-binding</keyword>
<keyword id="KW-1003">Cell membrane</keyword>
<keyword id="KW-0472">Membrane</keyword>
<keyword id="KW-0547">Nucleotide-binding</keyword>
<keyword id="KW-0592">Phosphate transport</keyword>
<keyword id="KW-1185">Reference proteome</keyword>
<keyword id="KW-1278">Translocase</keyword>
<keyword id="KW-0813">Transport</keyword>
<accession>Q65HC0</accession>
<accession>Q62SS5</accession>
<comment type="function">
    <text evidence="1">Part of the ABC transporter complex PstSACB involved in phosphate import. Responsible for energy coupling to the transport system.</text>
</comment>
<comment type="catalytic activity">
    <reaction evidence="1">
        <text>phosphate(out) + ATP + H2O = ADP + 2 phosphate(in) + H(+)</text>
        <dbReference type="Rhea" id="RHEA:24440"/>
        <dbReference type="ChEBI" id="CHEBI:15377"/>
        <dbReference type="ChEBI" id="CHEBI:15378"/>
        <dbReference type="ChEBI" id="CHEBI:30616"/>
        <dbReference type="ChEBI" id="CHEBI:43474"/>
        <dbReference type="ChEBI" id="CHEBI:456216"/>
        <dbReference type="EC" id="7.3.2.1"/>
    </reaction>
</comment>
<comment type="subunit">
    <text evidence="1">The complex is composed of two ATP-binding proteins (PstB), two transmembrane proteins (PstC and PstA) and a solute-binding protein (PstS).</text>
</comment>
<comment type="subcellular location">
    <subcellularLocation>
        <location evidence="1">Cell membrane</location>
        <topology evidence="1">Peripheral membrane protein</topology>
    </subcellularLocation>
</comment>
<comment type="similarity">
    <text evidence="1">Belongs to the ABC transporter superfamily. Phosphate importer (TC 3.A.1.7) family.</text>
</comment>